<name>VM3BG_BOTAL</name>
<sequence>SISACNGLKGHFLIEPLKLSDSEKTDLLNRSHDNAQLSPINLVVAVIMAHEMGHGMVLPGTK</sequence>
<protein>
    <recommendedName>
        <fullName>Zinc metalloproteinase-disintegrin-like BaG</fullName>
        <ecNumber>3.4.24.-</ecNumber>
    </recommendedName>
    <alternativeName>
        <fullName>Snake venom metalloproteinase</fullName>
        <shortName>SVMP</shortName>
    </alternativeName>
</protein>
<accession>P0C7B1</accession>
<keyword id="KW-1217">Cell adhesion impairing toxin</keyword>
<keyword id="KW-0903">Direct protein sequencing</keyword>
<keyword id="KW-0325">Glycoprotein</keyword>
<keyword id="KW-1199">Hemostasis impairing toxin</keyword>
<keyword id="KW-0378">Hydrolase</keyword>
<keyword id="KW-0479">Metal-binding</keyword>
<keyword id="KW-0482">Metalloprotease</keyword>
<keyword id="KW-1201">Platelet aggregation inhibiting toxin</keyword>
<keyword id="KW-0645">Protease</keyword>
<keyword id="KW-0964">Secreted</keyword>
<keyword id="KW-0800">Toxin</keyword>
<keyword id="KW-0862">Zinc</keyword>
<dbReference type="EC" id="3.4.24.-"/>
<dbReference type="SMR" id="P0C7B1"/>
<dbReference type="GO" id="GO:0005576">
    <property type="term" value="C:extracellular region"/>
    <property type="evidence" value="ECO:0007669"/>
    <property type="project" value="UniProtKB-SubCell"/>
</dbReference>
<dbReference type="GO" id="GO:0046872">
    <property type="term" value="F:metal ion binding"/>
    <property type="evidence" value="ECO:0007669"/>
    <property type="project" value="UniProtKB-KW"/>
</dbReference>
<dbReference type="GO" id="GO:0008237">
    <property type="term" value="F:metallopeptidase activity"/>
    <property type="evidence" value="ECO:0007669"/>
    <property type="project" value="UniProtKB-KW"/>
</dbReference>
<dbReference type="GO" id="GO:0090729">
    <property type="term" value="F:toxin activity"/>
    <property type="evidence" value="ECO:0007669"/>
    <property type="project" value="UniProtKB-KW"/>
</dbReference>
<dbReference type="GO" id="GO:0006508">
    <property type="term" value="P:proteolysis"/>
    <property type="evidence" value="ECO:0007669"/>
    <property type="project" value="UniProtKB-KW"/>
</dbReference>
<dbReference type="PROSITE" id="PS00142">
    <property type="entry name" value="ZINC_PROTEASE"/>
    <property type="match status" value="1"/>
</dbReference>
<feature type="chain" id="PRO_0000330007" description="Zinc metalloproteinase-disintegrin-like BaG">
    <location>
        <begin position="1" status="less than"/>
        <end position="62" status="greater than"/>
    </location>
</feature>
<feature type="domain" description="Peptidase M12B" evidence="3">
    <location>
        <begin position="24" status="less than"/>
        <end position="54" status="greater than"/>
    </location>
</feature>
<feature type="active site" evidence="3 4">
    <location>
        <position position="51"/>
    </location>
</feature>
<feature type="binding site" evidence="1">
    <location>
        <position position="50"/>
    </location>
    <ligand>
        <name>Zn(2+)</name>
        <dbReference type="ChEBI" id="CHEBI:29105"/>
        <note>catalytic</note>
    </ligand>
</feature>
<feature type="binding site" evidence="1">
    <location>
        <position position="54"/>
    </location>
    <ligand>
        <name>Zn(2+)</name>
        <dbReference type="ChEBI" id="CHEBI:29105"/>
        <note>catalytic</note>
    </ligand>
</feature>
<feature type="glycosylation site" description="N-linked (GlcNAc...) asparagine" evidence="2">
    <location>
        <position position="29"/>
    </location>
</feature>
<feature type="non-consecutive residues" evidence="6">
    <location>
        <begin position="12"/>
        <end position="13"/>
    </location>
</feature>
<feature type="non-consecutive residues" evidence="6">
    <location>
        <begin position="23"/>
        <end position="24"/>
    </location>
</feature>
<feature type="non-consecutive residues" evidence="6">
    <location>
        <begin position="37"/>
        <end position="38"/>
    </location>
</feature>
<feature type="non-consecutive residues" evidence="6">
    <location>
        <begin position="54"/>
        <end position="55"/>
    </location>
</feature>
<feature type="non-terminal residue">
    <location>
        <position position="1"/>
    </location>
</feature>
<feature type="non-terminal residue">
    <location>
        <position position="62"/>
    </location>
</feature>
<comment type="function">
    <text evidence="5">Snake venom Zinc metalloproteinase that inhibits ADP-induced platelet aggregation and inhibits the alpha-5/beta-1 (ITGA5/ITGB1) integrin, a fibronectin receptor. Has caseinolytic activity. Induces the detachment of cells that are bound to fibronectin.</text>
</comment>
<comment type="cofactor">
    <cofactor evidence="1">
        <name>Zn(2+)</name>
        <dbReference type="ChEBI" id="CHEBI:29105"/>
    </cofactor>
    <text evidence="1">Binds 1 zinc ion per subunit.</text>
</comment>
<comment type="activity regulation">
    <text evidence="5">Inhibited by EDTA, and 1,10-phenanthroline.</text>
</comment>
<comment type="subunit">
    <text evidence="5">Dimer.</text>
</comment>
<comment type="subcellular location">
    <subcellularLocation>
        <location evidence="5">Secreted</location>
    </subcellularLocation>
</comment>
<comment type="tissue specificity">
    <text evidence="5">Expressed by the venom gland.</text>
</comment>
<comment type="PTM">
    <text>The N-terminus is blocked.</text>
</comment>
<comment type="miscellaneous">
    <text evidence="7">Negative results: has no effect on alpha-2/beta-1 (ITGA2/ITGB1) integrin. Does not have hemorrhagic activity (PubMed:12893294).</text>
</comment>
<comment type="similarity">
    <text evidence="6">Belongs to the venom metalloproteinase (M12B) family. P-III subfamily. P-IIIc sub-subfamily.</text>
</comment>
<comment type="caution">
    <text evidence="6">Gly-60 is present instead of the conserved His which is expected to be zinc-binding residue. There is therefore some uncertainty concerning the enzymatic activity of this protein.</text>
</comment>
<proteinExistence type="evidence at protein level"/>
<organism>
    <name type="scientific">Bothrops alternatus</name>
    <name type="common">Urutu</name>
    <name type="synonym">Rhinocerophis alternatus</name>
    <dbReference type="NCBI Taxonomy" id="64174"/>
    <lineage>
        <taxon>Eukaryota</taxon>
        <taxon>Metazoa</taxon>
        <taxon>Chordata</taxon>
        <taxon>Craniata</taxon>
        <taxon>Vertebrata</taxon>
        <taxon>Euteleostomi</taxon>
        <taxon>Lepidosauria</taxon>
        <taxon>Squamata</taxon>
        <taxon>Bifurcata</taxon>
        <taxon>Unidentata</taxon>
        <taxon>Episquamata</taxon>
        <taxon>Toxicofera</taxon>
        <taxon>Serpentes</taxon>
        <taxon>Colubroidea</taxon>
        <taxon>Viperidae</taxon>
        <taxon>Crotalinae</taxon>
        <taxon>Bothrops</taxon>
    </lineage>
</organism>
<reference key="1">
    <citation type="journal article" date="2003" name="Arch. Biochem. Biophys.">
        <title>BaG, a new dimeric metalloproteinase/disintegrin from the Bothrops alternatus snake venom that interacts with alpha5beta1 integrin.</title>
        <authorList>
            <person name="Cominetti M.R."/>
            <person name="Ribeiro J.U."/>
            <person name="Fox J.W."/>
            <person name="Selistre-de-Araujo H.S."/>
        </authorList>
    </citation>
    <scope>PROTEIN SEQUENCE</scope>
    <scope>FUNCTION</scope>
    <scope>ACTIVITY REGULATION</scope>
    <scope>SUBUNIT</scope>
    <scope>SUBCELLULAR LOCATION</scope>
    <scope>TISSUE SPECIFICITY</scope>
    <source>
        <tissue>Venom</tissue>
    </source>
</reference>
<evidence type="ECO:0000250" key="1"/>
<evidence type="ECO:0000255" key="2"/>
<evidence type="ECO:0000255" key="3">
    <source>
        <dbReference type="PROSITE-ProRule" id="PRU00276"/>
    </source>
</evidence>
<evidence type="ECO:0000255" key="4">
    <source>
        <dbReference type="PROSITE-ProRule" id="PRU10095"/>
    </source>
</evidence>
<evidence type="ECO:0000269" key="5">
    <source>
    </source>
</evidence>
<evidence type="ECO:0000305" key="6"/>
<evidence type="ECO:0000305" key="7">
    <source>
    </source>
</evidence>